<sequence>MTVQTFIPNGAKAASENTVNQPVHTSDVSIKKLYIETQGCQMNEYDSHRMADLLGDSHGYVLTTDPKEADILLMNTCSIREKAQEKVFSELGRWRKLKQQNPDLIIGVGGCVASQEGDNIQKRAPYVDMVFGPQTLHRLPQMLDQHQDQIEKPKKDKIKLVDISFPDIEKFDFLPEPRVEGFKAFVSIMEGCSKYCSFCVVPYTRGEEVSRPLDDVLAEIAGLAEKGVREISLLGQNVNGYRGETFEGGICTFPELLRLVSEIPGIGRLRYTTSHPLEFSEELIQCYRDLPQMVSHLHLPVQSGSNAVLQAMKRNHTIDVYIEKIAKLRKIRPDMHLSSDFIIGFPGETEQNFEETYQFIKDLDFDHSYSFIYSKRPGTPASELEDTTSEAVKKERLAKVQHWIKQSSIRKTDAMQGTIQRVLIENVSEKDPNLLVGTADNTRLVTFVGDPMWVGRFAEIEITEIKTLNLVYGELLNLEPDVA</sequence>
<comment type="function">
    <text evidence="1">Catalyzes the methylthiolation of N6-(dimethylallyl)adenosine (i(6)A), leading to the formation of 2-methylthio-N6-(dimethylallyl)adenosine (ms(2)i(6)A) at position 37 in tRNAs that read codons beginning with uridine.</text>
</comment>
<comment type="catalytic activity">
    <reaction evidence="1">
        <text>N(6)-dimethylallyladenosine(37) in tRNA + (sulfur carrier)-SH + AH2 + 2 S-adenosyl-L-methionine = 2-methylsulfanyl-N(6)-dimethylallyladenosine(37) in tRNA + (sulfur carrier)-H + 5'-deoxyadenosine + L-methionine + A + S-adenosyl-L-homocysteine + 2 H(+)</text>
        <dbReference type="Rhea" id="RHEA:37067"/>
        <dbReference type="Rhea" id="RHEA-COMP:10375"/>
        <dbReference type="Rhea" id="RHEA-COMP:10376"/>
        <dbReference type="Rhea" id="RHEA-COMP:14737"/>
        <dbReference type="Rhea" id="RHEA-COMP:14739"/>
        <dbReference type="ChEBI" id="CHEBI:13193"/>
        <dbReference type="ChEBI" id="CHEBI:15378"/>
        <dbReference type="ChEBI" id="CHEBI:17319"/>
        <dbReference type="ChEBI" id="CHEBI:17499"/>
        <dbReference type="ChEBI" id="CHEBI:29917"/>
        <dbReference type="ChEBI" id="CHEBI:57844"/>
        <dbReference type="ChEBI" id="CHEBI:57856"/>
        <dbReference type="ChEBI" id="CHEBI:59789"/>
        <dbReference type="ChEBI" id="CHEBI:64428"/>
        <dbReference type="ChEBI" id="CHEBI:74415"/>
        <dbReference type="ChEBI" id="CHEBI:74417"/>
        <dbReference type="EC" id="2.8.4.3"/>
    </reaction>
</comment>
<comment type="cofactor">
    <cofactor evidence="1">
        <name>[4Fe-4S] cluster</name>
        <dbReference type="ChEBI" id="CHEBI:49883"/>
    </cofactor>
    <text evidence="1">Binds 2 [4Fe-4S] clusters. One cluster is coordinated with 3 cysteines and an exchangeable S-adenosyl-L-methionine.</text>
</comment>
<comment type="subunit">
    <text evidence="1">Monomer.</text>
</comment>
<comment type="subcellular location">
    <subcellularLocation>
        <location evidence="1">Cytoplasm</location>
    </subcellularLocation>
</comment>
<comment type="similarity">
    <text evidence="1">Belongs to the methylthiotransferase family. MiaB subfamily.</text>
</comment>
<dbReference type="EC" id="2.8.4.3" evidence="1"/>
<dbReference type="EMBL" id="CR543861">
    <property type="protein sequence ID" value="CAG69847.1"/>
    <property type="molecule type" value="Genomic_DNA"/>
</dbReference>
<dbReference type="RefSeq" id="WP_004924262.1">
    <property type="nucleotide sequence ID" value="NC_005966.1"/>
</dbReference>
<dbReference type="SMR" id="Q6F7W8"/>
<dbReference type="STRING" id="202950.GCA_001485005_02996"/>
<dbReference type="GeneID" id="45235375"/>
<dbReference type="KEGG" id="aci:ACIAD3158"/>
<dbReference type="eggNOG" id="COG0621">
    <property type="taxonomic scope" value="Bacteria"/>
</dbReference>
<dbReference type="HOGENOM" id="CLU_018697_2_0_6"/>
<dbReference type="OrthoDB" id="9805215at2"/>
<dbReference type="BioCyc" id="ASP62977:ACIAD_RS14300-MONOMER"/>
<dbReference type="Proteomes" id="UP000000430">
    <property type="component" value="Chromosome"/>
</dbReference>
<dbReference type="GO" id="GO:0005829">
    <property type="term" value="C:cytosol"/>
    <property type="evidence" value="ECO:0007669"/>
    <property type="project" value="TreeGrafter"/>
</dbReference>
<dbReference type="GO" id="GO:0051539">
    <property type="term" value="F:4 iron, 4 sulfur cluster binding"/>
    <property type="evidence" value="ECO:0007669"/>
    <property type="project" value="UniProtKB-UniRule"/>
</dbReference>
<dbReference type="GO" id="GO:0046872">
    <property type="term" value="F:metal ion binding"/>
    <property type="evidence" value="ECO:0007669"/>
    <property type="project" value="UniProtKB-KW"/>
</dbReference>
<dbReference type="GO" id="GO:0035597">
    <property type="term" value="F:N6-isopentenyladenosine methylthiotransferase activity"/>
    <property type="evidence" value="ECO:0007669"/>
    <property type="project" value="TreeGrafter"/>
</dbReference>
<dbReference type="CDD" id="cd01335">
    <property type="entry name" value="Radical_SAM"/>
    <property type="match status" value="1"/>
</dbReference>
<dbReference type="FunFam" id="3.40.50.12160:FF:000001">
    <property type="entry name" value="tRNA-2-methylthio-N(6)-dimethylallyladenosine synthase"/>
    <property type="match status" value="1"/>
</dbReference>
<dbReference type="FunFam" id="3.80.30.20:FF:000001">
    <property type="entry name" value="tRNA-2-methylthio-N(6)-dimethylallyladenosine synthase 2"/>
    <property type="match status" value="1"/>
</dbReference>
<dbReference type="Gene3D" id="3.40.50.12160">
    <property type="entry name" value="Methylthiotransferase, N-terminal domain"/>
    <property type="match status" value="1"/>
</dbReference>
<dbReference type="Gene3D" id="3.80.30.20">
    <property type="entry name" value="tm_1862 like domain"/>
    <property type="match status" value="1"/>
</dbReference>
<dbReference type="HAMAP" id="MF_01864">
    <property type="entry name" value="tRNA_metthiotr_MiaB"/>
    <property type="match status" value="1"/>
</dbReference>
<dbReference type="InterPro" id="IPR006638">
    <property type="entry name" value="Elp3/MiaA/NifB-like_rSAM"/>
</dbReference>
<dbReference type="InterPro" id="IPR005839">
    <property type="entry name" value="Methylthiotransferase"/>
</dbReference>
<dbReference type="InterPro" id="IPR020612">
    <property type="entry name" value="Methylthiotransferase_CS"/>
</dbReference>
<dbReference type="InterPro" id="IPR013848">
    <property type="entry name" value="Methylthiotransferase_N"/>
</dbReference>
<dbReference type="InterPro" id="IPR038135">
    <property type="entry name" value="Methylthiotransferase_N_sf"/>
</dbReference>
<dbReference type="InterPro" id="IPR006463">
    <property type="entry name" value="MiaB_methiolase"/>
</dbReference>
<dbReference type="InterPro" id="IPR007197">
    <property type="entry name" value="rSAM"/>
</dbReference>
<dbReference type="InterPro" id="IPR023404">
    <property type="entry name" value="rSAM_horseshoe"/>
</dbReference>
<dbReference type="InterPro" id="IPR002792">
    <property type="entry name" value="TRAM_dom"/>
</dbReference>
<dbReference type="NCBIfam" id="TIGR01574">
    <property type="entry name" value="miaB-methiolase"/>
    <property type="match status" value="1"/>
</dbReference>
<dbReference type="NCBIfam" id="TIGR00089">
    <property type="entry name" value="MiaB/RimO family radical SAM methylthiotransferase"/>
    <property type="match status" value="1"/>
</dbReference>
<dbReference type="PANTHER" id="PTHR43020">
    <property type="entry name" value="CDK5 REGULATORY SUBUNIT-ASSOCIATED PROTEIN 1"/>
    <property type="match status" value="1"/>
</dbReference>
<dbReference type="PANTHER" id="PTHR43020:SF2">
    <property type="entry name" value="MITOCHONDRIAL TRNA METHYLTHIOTRANSFERASE CDK5RAP1"/>
    <property type="match status" value="1"/>
</dbReference>
<dbReference type="Pfam" id="PF04055">
    <property type="entry name" value="Radical_SAM"/>
    <property type="match status" value="1"/>
</dbReference>
<dbReference type="Pfam" id="PF01938">
    <property type="entry name" value="TRAM"/>
    <property type="match status" value="1"/>
</dbReference>
<dbReference type="Pfam" id="PF00919">
    <property type="entry name" value="UPF0004"/>
    <property type="match status" value="1"/>
</dbReference>
<dbReference type="SFLD" id="SFLDF00273">
    <property type="entry name" value="(dimethylallyl)adenosine_tRNA"/>
    <property type="match status" value="1"/>
</dbReference>
<dbReference type="SFLD" id="SFLDG01082">
    <property type="entry name" value="B12-binding_domain_containing"/>
    <property type="match status" value="1"/>
</dbReference>
<dbReference type="SFLD" id="SFLDS00029">
    <property type="entry name" value="Radical_SAM"/>
    <property type="match status" value="1"/>
</dbReference>
<dbReference type="SMART" id="SM00729">
    <property type="entry name" value="Elp3"/>
    <property type="match status" value="1"/>
</dbReference>
<dbReference type="SUPFAM" id="SSF102114">
    <property type="entry name" value="Radical SAM enzymes"/>
    <property type="match status" value="1"/>
</dbReference>
<dbReference type="PROSITE" id="PS51449">
    <property type="entry name" value="MTTASE_N"/>
    <property type="match status" value="1"/>
</dbReference>
<dbReference type="PROSITE" id="PS01278">
    <property type="entry name" value="MTTASE_RADICAL"/>
    <property type="match status" value="1"/>
</dbReference>
<dbReference type="PROSITE" id="PS51918">
    <property type="entry name" value="RADICAL_SAM"/>
    <property type="match status" value="1"/>
</dbReference>
<dbReference type="PROSITE" id="PS50926">
    <property type="entry name" value="TRAM"/>
    <property type="match status" value="1"/>
</dbReference>
<proteinExistence type="inferred from homology"/>
<gene>
    <name evidence="1" type="primary">miaB</name>
    <name type="ordered locus">ACIAD3158</name>
</gene>
<accession>Q6F7W8</accession>
<name>MIAB_ACIAD</name>
<feature type="chain" id="PRO_0000374092" description="tRNA-2-methylthio-N(6)-dimethylallyladenosine synthase">
    <location>
        <begin position="1"/>
        <end position="483"/>
    </location>
</feature>
<feature type="domain" description="MTTase N-terminal" evidence="1">
    <location>
        <begin position="31"/>
        <end position="148"/>
    </location>
</feature>
<feature type="domain" description="Radical SAM core" evidence="2">
    <location>
        <begin position="178"/>
        <end position="410"/>
    </location>
</feature>
<feature type="domain" description="TRAM" evidence="1">
    <location>
        <begin position="413"/>
        <end position="477"/>
    </location>
</feature>
<feature type="binding site" evidence="1">
    <location>
        <position position="40"/>
    </location>
    <ligand>
        <name>[4Fe-4S] cluster</name>
        <dbReference type="ChEBI" id="CHEBI:49883"/>
        <label>1</label>
    </ligand>
</feature>
<feature type="binding site" evidence="1">
    <location>
        <position position="77"/>
    </location>
    <ligand>
        <name>[4Fe-4S] cluster</name>
        <dbReference type="ChEBI" id="CHEBI:49883"/>
        <label>1</label>
    </ligand>
</feature>
<feature type="binding site" evidence="1">
    <location>
        <position position="111"/>
    </location>
    <ligand>
        <name>[4Fe-4S] cluster</name>
        <dbReference type="ChEBI" id="CHEBI:49883"/>
        <label>1</label>
    </ligand>
</feature>
<feature type="binding site" evidence="1">
    <location>
        <position position="192"/>
    </location>
    <ligand>
        <name>[4Fe-4S] cluster</name>
        <dbReference type="ChEBI" id="CHEBI:49883"/>
        <label>2</label>
        <note>4Fe-4S-S-AdoMet</note>
    </ligand>
</feature>
<feature type="binding site" evidence="1">
    <location>
        <position position="196"/>
    </location>
    <ligand>
        <name>[4Fe-4S] cluster</name>
        <dbReference type="ChEBI" id="CHEBI:49883"/>
        <label>2</label>
        <note>4Fe-4S-S-AdoMet</note>
    </ligand>
</feature>
<feature type="binding site" evidence="1">
    <location>
        <position position="199"/>
    </location>
    <ligand>
        <name>[4Fe-4S] cluster</name>
        <dbReference type="ChEBI" id="CHEBI:49883"/>
        <label>2</label>
        <note>4Fe-4S-S-AdoMet</note>
    </ligand>
</feature>
<evidence type="ECO:0000255" key="1">
    <source>
        <dbReference type="HAMAP-Rule" id="MF_01864"/>
    </source>
</evidence>
<evidence type="ECO:0000255" key="2">
    <source>
        <dbReference type="PROSITE-ProRule" id="PRU01266"/>
    </source>
</evidence>
<keyword id="KW-0004">4Fe-4S</keyword>
<keyword id="KW-0963">Cytoplasm</keyword>
<keyword id="KW-0408">Iron</keyword>
<keyword id="KW-0411">Iron-sulfur</keyword>
<keyword id="KW-0479">Metal-binding</keyword>
<keyword id="KW-0949">S-adenosyl-L-methionine</keyword>
<keyword id="KW-0808">Transferase</keyword>
<keyword id="KW-0819">tRNA processing</keyword>
<reference key="1">
    <citation type="journal article" date="2004" name="Nucleic Acids Res.">
        <title>Unique features revealed by the genome sequence of Acinetobacter sp. ADP1, a versatile and naturally transformation competent bacterium.</title>
        <authorList>
            <person name="Barbe V."/>
            <person name="Vallenet D."/>
            <person name="Fonknechten N."/>
            <person name="Kreimeyer A."/>
            <person name="Oztas S."/>
            <person name="Labarre L."/>
            <person name="Cruveiller S."/>
            <person name="Robert C."/>
            <person name="Duprat S."/>
            <person name="Wincker P."/>
            <person name="Ornston L.N."/>
            <person name="Weissenbach J."/>
            <person name="Marliere P."/>
            <person name="Cohen G.N."/>
            <person name="Medigue C."/>
        </authorList>
    </citation>
    <scope>NUCLEOTIDE SEQUENCE [LARGE SCALE GENOMIC DNA]</scope>
    <source>
        <strain>ATCC 33305 / BD413 / ADP1</strain>
    </source>
</reference>
<protein>
    <recommendedName>
        <fullName evidence="1">tRNA-2-methylthio-N(6)-dimethylallyladenosine synthase</fullName>
        <ecNumber evidence="1">2.8.4.3</ecNumber>
    </recommendedName>
    <alternativeName>
        <fullName evidence="1">(Dimethylallyl)adenosine tRNA methylthiotransferase MiaB</fullName>
    </alternativeName>
    <alternativeName>
        <fullName evidence="1">tRNA-i(6)A37 methylthiotransferase</fullName>
    </alternativeName>
</protein>
<organism>
    <name type="scientific">Acinetobacter baylyi (strain ATCC 33305 / BD413 / ADP1)</name>
    <dbReference type="NCBI Taxonomy" id="62977"/>
    <lineage>
        <taxon>Bacteria</taxon>
        <taxon>Pseudomonadati</taxon>
        <taxon>Pseudomonadota</taxon>
        <taxon>Gammaproteobacteria</taxon>
        <taxon>Moraxellales</taxon>
        <taxon>Moraxellaceae</taxon>
        <taxon>Acinetobacter</taxon>
    </lineage>
</organism>